<proteinExistence type="inferred from homology"/>
<evidence type="ECO:0000250" key="1">
    <source>
        <dbReference type="UniProtKB" id="P34080"/>
    </source>
</evidence>
<evidence type="ECO:0000250" key="2">
    <source>
        <dbReference type="UniProtKB" id="P41181"/>
    </source>
</evidence>
<evidence type="ECO:0000303" key="3">
    <source>
    </source>
</evidence>
<evidence type="ECO:0000305" key="4"/>
<protein>
    <recommendedName>
        <fullName evidence="3">Aquaporin-2</fullName>
        <shortName>AQP-2</shortName>
    </recommendedName>
    <alternativeName>
        <fullName>ADH water channel</fullName>
    </alternativeName>
    <alternativeName>
        <fullName>Aquaporin-CD</fullName>
        <shortName>AQP-CD</shortName>
    </alternativeName>
    <alternativeName>
        <fullName>Collecting duct water channel protein</fullName>
    </alternativeName>
    <alternativeName>
        <fullName>WCH-CD</fullName>
    </alternativeName>
    <alternativeName>
        <fullName>Water channel protein for renal collecting duct</fullName>
    </alternativeName>
</protein>
<organism>
    <name type="scientific">Canis lupus familiaris</name>
    <name type="common">Dog</name>
    <name type="synonym">Canis familiaris</name>
    <dbReference type="NCBI Taxonomy" id="9615"/>
    <lineage>
        <taxon>Eukaryota</taxon>
        <taxon>Metazoa</taxon>
        <taxon>Chordata</taxon>
        <taxon>Craniata</taxon>
        <taxon>Vertebrata</taxon>
        <taxon>Euteleostomi</taxon>
        <taxon>Mammalia</taxon>
        <taxon>Eutheria</taxon>
        <taxon>Laurasiatheria</taxon>
        <taxon>Carnivora</taxon>
        <taxon>Caniformia</taxon>
        <taxon>Canidae</taxon>
        <taxon>Canis</taxon>
    </lineage>
</organism>
<sequence length="109" mass="11196">SVAFSRAVFAEFLATLLFVFFGLGSALNWPQALPSVLQIAMAFGLGIGTLVQALGHVSGAHINPAVTVACLVGCHVSFLRAAFYVAAQLLGAVAGAALLHEITPPHVRG</sequence>
<dbReference type="EMBL" id="Y10638">
    <property type="protein sequence ID" value="CAA71663.1"/>
    <property type="molecule type" value="Genomic_DNA"/>
</dbReference>
<dbReference type="SMR" id="P79144"/>
<dbReference type="FunCoup" id="P79144">
    <property type="interactions" value="12"/>
</dbReference>
<dbReference type="STRING" id="9615.ENSCAFP00000039918"/>
<dbReference type="PaxDb" id="9612-ENSCAFP00000039918"/>
<dbReference type="eggNOG" id="KOG0223">
    <property type="taxonomic scope" value="Eukaryota"/>
</dbReference>
<dbReference type="InParanoid" id="P79144"/>
<dbReference type="OrthoDB" id="3222at2759"/>
<dbReference type="Proteomes" id="UP000002254">
    <property type="component" value="Unplaced"/>
</dbReference>
<dbReference type="Proteomes" id="UP000694429">
    <property type="component" value="Unplaced"/>
</dbReference>
<dbReference type="Proteomes" id="UP000694542">
    <property type="component" value="Unplaced"/>
</dbReference>
<dbReference type="Proteomes" id="UP000805418">
    <property type="component" value="Unplaced"/>
</dbReference>
<dbReference type="GO" id="GO:0016324">
    <property type="term" value="C:apical plasma membrane"/>
    <property type="evidence" value="ECO:0000250"/>
    <property type="project" value="UniProtKB"/>
</dbReference>
<dbReference type="GO" id="GO:0016323">
    <property type="term" value="C:basolateral plasma membrane"/>
    <property type="evidence" value="ECO:0007669"/>
    <property type="project" value="UniProtKB-SubCell"/>
</dbReference>
<dbReference type="GO" id="GO:0030659">
    <property type="term" value="C:cytoplasmic vesicle membrane"/>
    <property type="evidence" value="ECO:0007669"/>
    <property type="project" value="UniProtKB-SubCell"/>
</dbReference>
<dbReference type="GO" id="GO:0005794">
    <property type="term" value="C:Golgi apparatus"/>
    <property type="evidence" value="ECO:0007669"/>
    <property type="project" value="UniProtKB-SubCell"/>
</dbReference>
<dbReference type="GO" id="GO:0005886">
    <property type="term" value="C:plasma membrane"/>
    <property type="evidence" value="ECO:0000250"/>
    <property type="project" value="UniProtKB"/>
</dbReference>
<dbReference type="GO" id="GO:0015250">
    <property type="term" value="F:water channel activity"/>
    <property type="evidence" value="ECO:0000250"/>
    <property type="project" value="UniProtKB"/>
</dbReference>
<dbReference type="GO" id="GO:0051289">
    <property type="term" value="P:protein homotetramerization"/>
    <property type="evidence" value="ECO:0000250"/>
    <property type="project" value="UniProtKB"/>
</dbReference>
<dbReference type="GO" id="GO:0006833">
    <property type="term" value="P:water transport"/>
    <property type="evidence" value="ECO:0000250"/>
    <property type="project" value="UniProtKB"/>
</dbReference>
<dbReference type="FunFam" id="1.20.1080.10:FF:000032">
    <property type="entry name" value="Aquaporin-2"/>
    <property type="match status" value="1"/>
</dbReference>
<dbReference type="Gene3D" id="1.20.1080.10">
    <property type="entry name" value="Glycerol uptake facilitator protein"/>
    <property type="match status" value="1"/>
</dbReference>
<dbReference type="InterPro" id="IPR023271">
    <property type="entry name" value="Aquaporin-like"/>
</dbReference>
<dbReference type="InterPro" id="IPR034294">
    <property type="entry name" value="Aquaporin_transptr"/>
</dbReference>
<dbReference type="InterPro" id="IPR000425">
    <property type="entry name" value="MIP"/>
</dbReference>
<dbReference type="InterPro" id="IPR022357">
    <property type="entry name" value="MIP_CS"/>
</dbReference>
<dbReference type="PANTHER" id="PTHR19139">
    <property type="entry name" value="AQUAPORIN TRANSPORTER"/>
    <property type="match status" value="1"/>
</dbReference>
<dbReference type="PANTHER" id="PTHR19139:SF45">
    <property type="entry name" value="AQUAPORIN-2"/>
    <property type="match status" value="1"/>
</dbReference>
<dbReference type="Pfam" id="PF00230">
    <property type="entry name" value="MIP"/>
    <property type="match status" value="1"/>
</dbReference>
<dbReference type="PRINTS" id="PR02014">
    <property type="entry name" value="AQUAPORIN2"/>
</dbReference>
<dbReference type="PRINTS" id="PR00783">
    <property type="entry name" value="MINTRINSICP"/>
</dbReference>
<dbReference type="SUPFAM" id="SSF81338">
    <property type="entry name" value="Aquaporin-like"/>
    <property type="match status" value="1"/>
</dbReference>
<dbReference type="PROSITE" id="PS00221">
    <property type="entry name" value="MIP"/>
    <property type="match status" value="1"/>
</dbReference>
<comment type="function">
    <text evidence="2">Forms a water-specific channel that provides the plasma membranes of renal collecting duct with high permeability to water, thereby permitting water to move in the direction of an osmotic gradient. Plays an essential role in renal water homeostasis. Could also be permeable to glycerol.</text>
</comment>
<comment type="catalytic activity">
    <reaction evidence="2">
        <text>H2O(in) = H2O(out)</text>
        <dbReference type="Rhea" id="RHEA:29667"/>
        <dbReference type="ChEBI" id="CHEBI:15377"/>
    </reaction>
</comment>
<comment type="catalytic activity">
    <reaction evidence="2">
        <text>glycerol(in) = glycerol(out)</text>
        <dbReference type="Rhea" id="RHEA:29675"/>
        <dbReference type="ChEBI" id="CHEBI:17754"/>
    </reaction>
</comment>
<comment type="subunit">
    <text evidence="2">Homotetramer.</text>
</comment>
<comment type="subcellular location">
    <subcellularLocation>
        <location evidence="2">Apical cell membrane</location>
        <topology evidence="2">Multi-pass membrane protein</topology>
    </subcellularLocation>
    <subcellularLocation>
        <location evidence="1">Basolateral cell membrane</location>
        <topology evidence="2">Multi-pass membrane protein</topology>
    </subcellularLocation>
    <subcellularLocation>
        <location evidence="2">Cell membrane</location>
        <topology evidence="2">Multi-pass membrane protein</topology>
    </subcellularLocation>
    <subcellularLocation>
        <location evidence="2">Cytoplasmic vesicle membrane</location>
        <topology evidence="2">Multi-pass membrane protein</topology>
    </subcellularLocation>
    <subcellularLocation>
        <location evidence="2">Golgi apparatus</location>
        <location evidence="2">trans-Golgi network membrane</location>
        <topology evidence="2">Multi-pass membrane protein</topology>
    </subcellularLocation>
    <text evidence="2">Shuttles from vesicles to the apical membrane. Vasopressin-regulated phosphorylation is required for translocation to the apical cell membrane. PLEKHA8/FAPP2 is required to transport AQP2 from the TGN to sites where AQP2 is phosphorylated.</text>
</comment>
<comment type="domain">
    <text evidence="2">Aquaporins contain two tandem repeats each containing three membrane-spanning domains and a pore-forming loop with the signature motif Asn-Pro-Ala (NPA).</text>
</comment>
<comment type="PTM">
    <text evidence="2">Serine phosphorylation is necessary and sufficient for expression at the apical membrane. Endocytosis is not phosphorylation-dependent.</text>
</comment>
<comment type="PTM">
    <text evidence="2">N-glycosylated.</text>
</comment>
<comment type="similarity">
    <text evidence="4">Belongs to the MIP/aquaporin (TC 1.A.8) family.</text>
</comment>
<reference key="1">
    <citation type="journal article" date="1997" name="Mol. Biol. Evol.">
        <title>Molecular evolution of mammalian aquaporin-2: further evidence that elephant shrew and aardvark join the paenungulate clade.</title>
        <authorList>
            <person name="Madsen O.J."/>
            <person name="Deen P.M.T."/>
            <person name="Pesole G."/>
            <person name="Saccone C."/>
            <person name="de Jong W.W."/>
        </authorList>
    </citation>
    <scope>NUCLEOTIDE SEQUENCE [GENOMIC DNA]</scope>
</reference>
<keyword id="KW-1003">Cell membrane</keyword>
<keyword id="KW-0968">Cytoplasmic vesicle</keyword>
<keyword id="KW-0325">Glycoprotein</keyword>
<keyword id="KW-0333">Golgi apparatus</keyword>
<keyword id="KW-0472">Membrane</keyword>
<keyword id="KW-0597">Phosphoprotein</keyword>
<keyword id="KW-1185">Reference proteome</keyword>
<keyword id="KW-0812">Transmembrane</keyword>
<keyword id="KW-1133">Transmembrane helix</keyword>
<keyword id="KW-0813">Transport</keyword>
<name>AQP2_CANLF</name>
<gene>
    <name evidence="2" type="primary">AQP2</name>
</gene>
<accession>P79144</accession>
<feature type="chain" id="PRO_0000063928" description="Aquaporin-2">
    <location>
        <begin position="1" status="less than"/>
        <end position="109" status="greater than"/>
    </location>
</feature>
<feature type="topological domain" description="Cytoplasmic" evidence="4">
    <location>
        <begin position="1" status="less than"/>
        <end position="6"/>
    </location>
</feature>
<feature type="transmembrane region" description="Helical" evidence="2">
    <location>
        <begin position="7"/>
        <end position="27"/>
    </location>
</feature>
<feature type="topological domain" description="Extracellular" evidence="4">
    <location>
        <begin position="28"/>
        <end position="35"/>
    </location>
</feature>
<feature type="transmembrane region" description="Helical" evidence="2">
    <location>
        <begin position="36"/>
        <end position="54"/>
    </location>
</feature>
<feature type="topological domain" description="Cytoplasmic" evidence="4">
    <location>
        <begin position="55"/>
        <end position="59"/>
    </location>
</feature>
<feature type="intramembrane region" description="Discontinuously helical" evidence="2">
    <location>
        <begin position="60"/>
        <end position="69"/>
    </location>
</feature>
<feature type="topological domain" description="Cytoplasmic" evidence="4">
    <location>
        <begin position="70"/>
        <end position="80"/>
    </location>
</feature>
<feature type="transmembrane region" description="Helical" evidence="2">
    <location>
        <begin position="81"/>
        <end position="102"/>
    </location>
</feature>
<feature type="topological domain" description="Extracellular" evidence="4">
    <location>
        <begin position="103"/>
        <end position="109" status="greater than"/>
    </location>
</feature>
<feature type="short sequence motif" description="NPA 1" evidence="2">
    <location>
        <begin position="63"/>
        <end position="65"/>
    </location>
</feature>
<feature type="non-terminal residue">
    <location>
        <position position="1"/>
    </location>
</feature>
<feature type="non-terminal residue">
    <location>
        <position position="109"/>
    </location>
</feature>